<dbReference type="EC" id="2.4.1.186" evidence="5 6"/>
<dbReference type="EMBL" id="CM002240">
    <property type="protein sequence ID" value="ESA42597.1"/>
    <property type="molecule type" value="Genomic_DNA"/>
</dbReference>
<dbReference type="RefSeq" id="XP_011394702.1">
    <property type="nucleotide sequence ID" value="XM_011396400.1"/>
</dbReference>
<dbReference type="SMR" id="V5ILS6"/>
<dbReference type="STRING" id="367110.V5ILS6"/>
<dbReference type="PaxDb" id="5141-EFNCRP00000006683"/>
<dbReference type="EnsemblFungi" id="ESA42597">
    <property type="protein sequence ID" value="ESA42597"/>
    <property type="gene ID" value="NCU06698"/>
</dbReference>
<dbReference type="GeneID" id="3877160"/>
<dbReference type="VEuPathDB" id="FungiDB:NCU06698"/>
<dbReference type="HOGENOM" id="CLU_017171_2_0_1"/>
<dbReference type="InParanoid" id="V5ILS6"/>
<dbReference type="OMA" id="MVHFIGP"/>
<dbReference type="OrthoDB" id="2014201at2759"/>
<dbReference type="Proteomes" id="UP000001805">
    <property type="component" value="Chromosome 2, Linkage Group V"/>
</dbReference>
<dbReference type="GO" id="GO:0005737">
    <property type="term" value="C:cytoplasm"/>
    <property type="evidence" value="ECO:0000318"/>
    <property type="project" value="GO_Central"/>
</dbReference>
<dbReference type="GO" id="GO:0005773">
    <property type="term" value="C:vacuole"/>
    <property type="evidence" value="ECO:0007669"/>
    <property type="project" value="UniProtKB-SubCell"/>
</dbReference>
<dbReference type="GO" id="GO:0008466">
    <property type="term" value="F:glycogenin glucosyltransferase activity"/>
    <property type="evidence" value="ECO:0000314"/>
    <property type="project" value="UniProtKB"/>
</dbReference>
<dbReference type="GO" id="GO:0016757">
    <property type="term" value="F:glycosyltransferase activity"/>
    <property type="evidence" value="ECO:0000318"/>
    <property type="project" value="GO_Central"/>
</dbReference>
<dbReference type="GO" id="GO:0046872">
    <property type="term" value="F:metal ion binding"/>
    <property type="evidence" value="ECO:0007669"/>
    <property type="project" value="UniProtKB-KW"/>
</dbReference>
<dbReference type="GO" id="GO:0005978">
    <property type="term" value="P:glycogen biosynthetic process"/>
    <property type="evidence" value="ECO:0000314"/>
    <property type="project" value="UniProtKB"/>
</dbReference>
<dbReference type="CDD" id="cd02537">
    <property type="entry name" value="GT8_Glycogenin"/>
    <property type="match status" value="1"/>
</dbReference>
<dbReference type="FunFam" id="3.90.550.10:FF:000092">
    <property type="entry name" value="Glycogenin 2"/>
    <property type="match status" value="1"/>
</dbReference>
<dbReference type="Gene3D" id="3.90.550.10">
    <property type="entry name" value="Spore Coat Polysaccharide Biosynthesis Protein SpsA, Chain A"/>
    <property type="match status" value="1"/>
</dbReference>
<dbReference type="InterPro" id="IPR002495">
    <property type="entry name" value="Glyco_trans_8"/>
</dbReference>
<dbReference type="InterPro" id="IPR050587">
    <property type="entry name" value="GNT1/Glycosyltrans_8"/>
</dbReference>
<dbReference type="InterPro" id="IPR029044">
    <property type="entry name" value="Nucleotide-diphossugar_trans"/>
</dbReference>
<dbReference type="PANTHER" id="PTHR11183">
    <property type="entry name" value="GLYCOGENIN SUBFAMILY MEMBER"/>
    <property type="match status" value="1"/>
</dbReference>
<dbReference type="Pfam" id="PF01501">
    <property type="entry name" value="Glyco_transf_8"/>
    <property type="match status" value="1"/>
</dbReference>
<dbReference type="SUPFAM" id="SSF53448">
    <property type="entry name" value="Nucleotide-diphospho-sugar transferases"/>
    <property type="match status" value="1"/>
</dbReference>
<reference evidence="10" key="1">
    <citation type="journal article" date="2003" name="Nature">
        <title>The genome sequence of the filamentous fungus Neurospora crassa.</title>
        <authorList>
            <person name="Galagan J.E."/>
            <person name="Calvo S.E."/>
            <person name="Borkovich K.A."/>
            <person name="Selker E.U."/>
            <person name="Read N.D."/>
            <person name="Jaffe D.B."/>
            <person name="FitzHugh W."/>
            <person name="Ma L.-J."/>
            <person name="Smirnov S."/>
            <person name="Purcell S."/>
            <person name="Rehman B."/>
            <person name="Elkins T."/>
            <person name="Engels R."/>
            <person name="Wang S."/>
            <person name="Nielsen C.B."/>
            <person name="Butler J."/>
            <person name="Endrizzi M."/>
            <person name="Qui D."/>
            <person name="Ianakiev P."/>
            <person name="Bell-Pedersen D."/>
            <person name="Nelson M.A."/>
            <person name="Werner-Washburne M."/>
            <person name="Selitrennikoff C.P."/>
            <person name="Kinsey J.A."/>
            <person name="Braun E.L."/>
            <person name="Zelter A."/>
            <person name="Schulte U."/>
            <person name="Kothe G.O."/>
            <person name="Jedd G."/>
            <person name="Mewes H.-W."/>
            <person name="Staben C."/>
            <person name="Marcotte E."/>
            <person name="Greenberg D."/>
            <person name="Roy A."/>
            <person name="Foley K."/>
            <person name="Naylor J."/>
            <person name="Stange-Thomann N."/>
            <person name="Barrett R."/>
            <person name="Gnerre S."/>
            <person name="Kamal M."/>
            <person name="Kamvysselis M."/>
            <person name="Mauceli E.W."/>
            <person name="Bielke C."/>
            <person name="Rudd S."/>
            <person name="Frishman D."/>
            <person name="Krystofova S."/>
            <person name="Rasmussen C."/>
            <person name="Metzenberg R.L."/>
            <person name="Perkins D.D."/>
            <person name="Kroken S."/>
            <person name="Cogoni C."/>
            <person name="Macino G."/>
            <person name="Catcheside D.E.A."/>
            <person name="Li W."/>
            <person name="Pratt R.J."/>
            <person name="Osmani S.A."/>
            <person name="DeSouza C.P.C."/>
            <person name="Glass N.L."/>
            <person name="Orbach M.J."/>
            <person name="Berglund J.A."/>
            <person name="Voelker R."/>
            <person name="Yarden O."/>
            <person name="Plamann M."/>
            <person name="Seiler S."/>
            <person name="Dunlap J.C."/>
            <person name="Radford A."/>
            <person name="Aramayo R."/>
            <person name="Natvig D.O."/>
            <person name="Alex L.A."/>
            <person name="Mannhaupt G."/>
            <person name="Ebbole D.J."/>
            <person name="Freitag M."/>
            <person name="Paulsen I."/>
            <person name="Sachs M.S."/>
            <person name="Lander E.S."/>
            <person name="Nusbaum C."/>
            <person name="Birren B.W."/>
        </authorList>
    </citation>
    <scope>NUCLEOTIDE SEQUENCE [LARGE SCALE GENOMIC DNA]</scope>
    <source>
        <strain>ATCC 24698 / 74-OR23-1A / CBS 708.71 / DSM 1257 / FGSC 987</strain>
    </source>
</reference>
<reference evidence="8" key="2">
    <citation type="journal article" date="2005" name="Arch. Biochem. Biophys.">
        <title>GNN is a self-glucosylating protein involved in the initiation step of glycogen biosynthesis in Neurospora crassa.</title>
        <authorList>
            <person name="de Paula R.M."/>
            <person name="Wilson W.A."/>
            <person name="Terenzi H.F."/>
            <person name="Roach P.J."/>
            <person name="Bertolini M.C."/>
        </authorList>
    </citation>
    <scope>FUNCTION</scope>
    <scope>CATALYTIC ACTIVITY</scope>
    <scope>INDUCTION</scope>
</reference>
<reference evidence="8" key="3">
    <citation type="journal article" date="2005" name="FEBS Lett.">
        <title>Biochemical characterization of Neurospora crassa glycogenin (GNN), the self-glucosylating initiator of glycogen synthesis.</title>
        <authorList>
            <person name="de Paula R.M."/>
            <person name="Wilson W.A."/>
            <person name="Roach P.J."/>
            <person name="Terenzi H.F."/>
            <person name="Bertolini M.C."/>
        </authorList>
    </citation>
    <scope>FUNCTION</scope>
    <scope>CATALYTIC ACTIVITY</scope>
    <scope>BIOPHYSICOCHEMICAL PROPERTIES</scope>
    <scope>INTERACTION WITH GSY-1</scope>
    <scope>GLYCOSYLATION AT TYR-196 AND TYR-198</scope>
</reference>
<comment type="function">
    <text evidence="5 6">Self-glucosylating initiator of glycogen synthesis (PubMed:15680913, PubMed:15811343). It catalyzes the formation of a short alpha (1,4)-glucosyl chain covalently attached via a glucose 1-O-tyrosyl linkage to internal tyrosine residues and these chains act as primers for the elongation reaction catalyzed by glycogen synthase (PubMed:15680913, PubMed:15811343).</text>
</comment>
<comment type="catalytic activity">
    <reaction evidence="5 6">
        <text>L-tyrosyl-[glycogenin] + UDP-alpha-D-glucose = alpha-D-glucosyl-L-tyrosyl-[glycogenin] + UDP + H(+)</text>
        <dbReference type="Rhea" id="RHEA:23360"/>
        <dbReference type="Rhea" id="RHEA-COMP:14604"/>
        <dbReference type="Rhea" id="RHEA-COMP:14605"/>
        <dbReference type="ChEBI" id="CHEBI:15378"/>
        <dbReference type="ChEBI" id="CHEBI:46858"/>
        <dbReference type="ChEBI" id="CHEBI:58223"/>
        <dbReference type="ChEBI" id="CHEBI:58885"/>
        <dbReference type="ChEBI" id="CHEBI:140573"/>
        <dbReference type="EC" id="2.4.1.186"/>
    </reaction>
</comment>
<comment type="catalytic activity">
    <reaction evidence="5 6">
        <text>[1,4-alpha-D-glucosyl](n)-L-tyrosyl-[glycogenin] + UDP-alpha-D-glucose = [1,4-alpha-D-glucosyl](n+1)-L-tyrosyl-[glycogenin] + UDP + H(+)</text>
        <dbReference type="Rhea" id="RHEA:56560"/>
        <dbReference type="Rhea" id="RHEA-COMP:14606"/>
        <dbReference type="Rhea" id="RHEA-COMP:14607"/>
        <dbReference type="ChEBI" id="CHEBI:15378"/>
        <dbReference type="ChEBI" id="CHEBI:58223"/>
        <dbReference type="ChEBI" id="CHEBI:58885"/>
        <dbReference type="ChEBI" id="CHEBI:140574"/>
        <dbReference type="EC" id="2.4.1.186"/>
    </reaction>
</comment>
<comment type="cofactor">
    <cofactor evidence="3">
        <name>Mn(2+)</name>
        <dbReference type="ChEBI" id="CHEBI:29035"/>
    </cofactor>
</comment>
<comment type="biophysicochemical properties">
    <kinetics>
        <KM evidence="6">4.4 uM for UDP-glucose using C-terminally truncated protein (at 30 degrees Celsius and at pH 7.6)</KM>
    </kinetics>
</comment>
<comment type="subunit">
    <text evidence="6">Interacts with glycogen synthase gsy-1; the interaction is direct.</text>
</comment>
<comment type="subcellular location">
    <subcellularLocation>
        <location evidence="1">Cytoplasm</location>
    </subcellularLocation>
    <subcellularLocation>
        <location evidence="1">Vacuole</location>
    </subcellularLocation>
    <text evidence="1">Localizes to glycogen granules (glycosomes) in the cytoplasm. Localizes to the vacuole during nitrogen starvation-induced glycophagy (autophagy of glycosomes).</text>
</comment>
<comment type="induction">
    <text evidence="5">Expressed during vegetative growth and repressed during carbon starvation.</text>
</comment>
<comment type="similarity">
    <text evidence="8">Belongs to the glycosyltransferase 8 family. Glycogenin subfamily.</text>
</comment>
<evidence type="ECO:0000250" key="1">
    <source>
        <dbReference type="UniProtKB" id="C4R941"/>
    </source>
</evidence>
<evidence type="ECO:0000250" key="2">
    <source>
        <dbReference type="UniProtKB" id="P13280"/>
    </source>
</evidence>
<evidence type="ECO:0000250" key="3">
    <source>
        <dbReference type="UniProtKB" id="P46976"/>
    </source>
</evidence>
<evidence type="ECO:0000256" key="4">
    <source>
        <dbReference type="SAM" id="MobiDB-lite"/>
    </source>
</evidence>
<evidence type="ECO:0000269" key="5">
    <source>
    </source>
</evidence>
<evidence type="ECO:0000269" key="6">
    <source>
    </source>
</evidence>
<evidence type="ECO:0000303" key="7">
    <source>
    </source>
</evidence>
<evidence type="ECO:0000305" key="8"/>
<evidence type="ECO:0000312" key="9">
    <source>
        <dbReference type="EMBL" id="ESA42597.1"/>
    </source>
</evidence>
<evidence type="ECO:0000312" key="10">
    <source>
        <dbReference type="Proteomes" id="UP000001805"/>
    </source>
</evidence>
<protein>
    <recommendedName>
        <fullName evidence="7">Glycogenin</fullName>
        <ecNumber evidence="5 6">2.4.1.186</ecNumber>
    </recommendedName>
    <alternativeName>
        <fullName evidence="8">Glycogen synthesis initiator protein 1</fullName>
    </alternativeName>
    <alternativeName>
        <fullName evidence="8">Glycogenin glucosyltransferase 1</fullName>
    </alternativeName>
</protein>
<proteinExistence type="evidence at protein level"/>
<organism evidence="9 10">
    <name type="scientific">Neurospora crassa (strain ATCC 24698 / 74-OR23-1A / CBS 708.71 / DSM 1257 / FGSC 987)</name>
    <dbReference type="NCBI Taxonomy" id="367110"/>
    <lineage>
        <taxon>Eukaryota</taxon>
        <taxon>Fungi</taxon>
        <taxon>Dikarya</taxon>
        <taxon>Ascomycota</taxon>
        <taxon>Pezizomycotina</taxon>
        <taxon>Sordariomycetes</taxon>
        <taxon>Sordariomycetidae</taxon>
        <taxon>Sordariales</taxon>
        <taxon>Sordariaceae</taxon>
        <taxon>Neurospora</taxon>
    </lineage>
</organism>
<accession>V5ILS6</accession>
<gene>
    <name evidence="7" type="primary">gnn</name>
    <name evidence="9" type="ORF">NCU06698</name>
</gene>
<keyword id="KW-0963">Cytoplasm</keyword>
<keyword id="KW-0320">Glycogen biosynthesis</keyword>
<keyword id="KW-0325">Glycoprotein</keyword>
<keyword id="KW-0464">Manganese</keyword>
<keyword id="KW-0479">Metal-binding</keyword>
<keyword id="KW-1185">Reference proteome</keyword>
<keyword id="KW-0808">Transferase</keyword>
<keyword id="KW-0926">Vacuole</keyword>
<feature type="chain" id="PRO_0000461102" description="Glycogenin">
    <location>
        <begin position="1"/>
        <end position="686"/>
    </location>
</feature>
<feature type="region of interest" description="Disordered" evidence="4">
    <location>
        <begin position="264"/>
        <end position="331"/>
    </location>
</feature>
<feature type="region of interest" description="Not required for catalytic activity" evidence="6">
    <location>
        <begin position="307"/>
        <end position="686"/>
    </location>
</feature>
<feature type="region of interest" description="Disordered" evidence="4">
    <location>
        <begin position="381"/>
        <end position="444"/>
    </location>
</feature>
<feature type="region of interest" description="Disordered" evidence="4">
    <location>
        <begin position="460"/>
        <end position="533"/>
    </location>
</feature>
<feature type="region of interest" description="Disordered" evidence="4">
    <location>
        <begin position="603"/>
        <end position="686"/>
    </location>
</feature>
<feature type="compositionally biased region" description="Low complexity" evidence="4">
    <location>
        <begin position="285"/>
        <end position="308"/>
    </location>
</feature>
<feature type="compositionally biased region" description="Low complexity" evidence="4">
    <location>
        <begin position="398"/>
        <end position="416"/>
    </location>
</feature>
<feature type="compositionally biased region" description="Polar residues" evidence="4">
    <location>
        <begin position="424"/>
        <end position="442"/>
    </location>
</feature>
<feature type="compositionally biased region" description="Polar residues" evidence="4">
    <location>
        <begin position="471"/>
        <end position="483"/>
    </location>
</feature>
<feature type="compositionally biased region" description="Acidic residues" evidence="4">
    <location>
        <begin position="677"/>
        <end position="686"/>
    </location>
</feature>
<feature type="binding site" evidence="3">
    <location>
        <position position="13"/>
    </location>
    <ligand>
        <name>UDP</name>
        <dbReference type="ChEBI" id="CHEBI:58223"/>
    </ligand>
</feature>
<feature type="binding site" evidence="3">
    <location>
        <position position="13"/>
    </location>
    <ligand>
        <name>UDP-alpha-D-glucose</name>
        <dbReference type="ChEBI" id="CHEBI:58885"/>
    </ligand>
</feature>
<feature type="binding site" evidence="3">
    <location>
        <position position="16"/>
    </location>
    <ligand>
        <name>UDP</name>
        <dbReference type="ChEBI" id="CHEBI:58223"/>
    </ligand>
</feature>
<feature type="binding site" evidence="2">
    <location>
        <position position="16"/>
    </location>
    <ligand>
        <name>UDP-alpha-D-glucose</name>
        <dbReference type="ChEBI" id="CHEBI:58885"/>
    </ligand>
</feature>
<feature type="binding site" evidence="3">
    <location>
        <position position="19"/>
    </location>
    <ligand>
        <name>UDP</name>
        <dbReference type="ChEBI" id="CHEBI:58223"/>
    </ligand>
</feature>
<feature type="binding site" evidence="3">
    <location>
        <position position="19"/>
    </location>
    <ligand>
        <name>UDP-alpha-D-glucose</name>
        <dbReference type="ChEBI" id="CHEBI:58885"/>
    </ligand>
</feature>
<feature type="binding site" evidence="3">
    <location>
        <position position="82"/>
    </location>
    <ligand>
        <name>UDP</name>
        <dbReference type="ChEBI" id="CHEBI:58223"/>
    </ligand>
</feature>
<feature type="binding site" evidence="3">
    <location>
        <position position="82"/>
    </location>
    <ligand>
        <name>UDP-alpha-D-glucose</name>
        <dbReference type="ChEBI" id="CHEBI:58885"/>
    </ligand>
</feature>
<feature type="binding site" evidence="3">
    <location>
        <position position="91"/>
    </location>
    <ligand>
        <name>UDP-alpha-D-glucose</name>
        <dbReference type="ChEBI" id="CHEBI:58885"/>
    </ligand>
</feature>
<feature type="binding site" evidence="3">
    <location>
        <position position="107"/>
    </location>
    <ligand>
        <name>Mn(2+)</name>
        <dbReference type="ChEBI" id="CHEBI:29035"/>
    </ligand>
</feature>
<feature type="binding site" evidence="2">
    <location>
        <position position="107"/>
    </location>
    <ligand>
        <name>UDP</name>
        <dbReference type="ChEBI" id="CHEBI:58223"/>
    </ligand>
</feature>
<feature type="binding site" evidence="3">
    <location>
        <position position="107"/>
    </location>
    <ligand>
        <name>UDP-alpha-D-glucose</name>
        <dbReference type="ChEBI" id="CHEBI:58885"/>
    </ligand>
</feature>
<feature type="binding site" evidence="3">
    <location>
        <position position="108"/>
    </location>
    <ligand>
        <name>UDP</name>
        <dbReference type="ChEBI" id="CHEBI:58223"/>
    </ligand>
</feature>
<feature type="binding site" evidence="3">
    <location>
        <position position="108"/>
    </location>
    <ligand>
        <name>UDP-alpha-D-glucose</name>
        <dbReference type="ChEBI" id="CHEBI:58885"/>
    </ligand>
</feature>
<feature type="binding site" evidence="3">
    <location>
        <position position="109"/>
    </location>
    <ligand>
        <name>Mn(2+)</name>
        <dbReference type="ChEBI" id="CHEBI:29035"/>
    </ligand>
</feature>
<feature type="binding site" evidence="3">
    <location>
        <position position="109"/>
    </location>
    <ligand>
        <name>UDP</name>
        <dbReference type="ChEBI" id="CHEBI:58223"/>
    </ligand>
</feature>
<feature type="binding site" evidence="3">
    <location>
        <position position="109"/>
    </location>
    <ligand>
        <name>UDP-alpha-D-glucose</name>
        <dbReference type="ChEBI" id="CHEBI:58885"/>
    </ligand>
</feature>
<feature type="binding site" evidence="3">
    <location>
        <position position="139"/>
    </location>
    <ligand>
        <name>UDP-alpha-D-glucose</name>
        <dbReference type="ChEBI" id="CHEBI:58885"/>
    </ligand>
</feature>
<feature type="binding site" evidence="3">
    <location>
        <position position="140"/>
    </location>
    <ligand>
        <name>UDP-alpha-D-glucose</name>
        <dbReference type="ChEBI" id="CHEBI:58885"/>
    </ligand>
</feature>
<feature type="binding site" evidence="3">
    <location>
        <position position="166"/>
    </location>
    <ligand>
        <name>UDP-alpha-D-glucose</name>
        <dbReference type="ChEBI" id="CHEBI:58885"/>
    </ligand>
</feature>
<feature type="binding site" evidence="3">
    <location>
        <position position="169"/>
    </location>
    <ligand>
        <name>UDP-alpha-D-glucose</name>
        <dbReference type="ChEBI" id="CHEBI:58885"/>
    </ligand>
</feature>
<feature type="binding site" evidence="3">
    <location>
        <position position="170"/>
    </location>
    <ligand>
        <name>UDP-alpha-D-glucose</name>
        <dbReference type="ChEBI" id="CHEBI:58885"/>
    </ligand>
</feature>
<feature type="binding site" evidence="3">
    <location>
        <position position="213"/>
    </location>
    <ligand>
        <name>Mn(2+)</name>
        <dbReference type="ChEBI" id="CHEBI:29035"/>
    </ligand>
</feature>
<feature type="binding site" evidence="2">
    <location>
        <position position="213"/>
    </location>
    <ligand>
        <name>UDP</name>
        <dbReference type="ChEBI" id="CHEBI:58223"/>
    </ligand>
</feature>
<feature type="binding site" evidence="3">
    <location>
        <position position="216"/>
    </location>
    <ligand>
        <name>UDP</name>
        <dbReference type="ChEBI" id="CHEBI:58223"/>
    </ligand>
</feature>
<feature type="binding site" evidence="3">
    <location>
        <position position="216"/>
    </location>
    <ligand>
        <name>UDP-alpha-D-glucose</name>
        <dbReference type="ChEBI" id="CHEBI:58885"/>
    </ligand>
</feature>
<feature type="binding site" evidence="3">
    <location>
        <position position="219"/>
    </location>
    <ligand>
        <name>UDP</name>
        <dbReference type="ChEBI" id="CHEBI:58223"/>
    </ligand>
</feature>
<feature type="binding site" evidence="3">
    <location>
        <position position="219"/>
    </location>
    <ligand>
        <name>UDP-alpha-D-glucose</name>
        <dbReference type="ChEBI" id="CHEBI:58885"/>
    </ligand>
</feature>
<feature type="site" description="Important for catalytic activity" evidence="2">
    <location>
        <position position="91"/>
    </location>
</feature>
<feature type="glycosylation site" description="O-linked (Glc...) tyrosine" evidence="6">
    <location>
        <position position="196"/>
    </location>
</feature>
<feature type="glycosylation site" description="O-linked (Glc...) tyrosine" evidence="6">
    <location>
        <position position="198"/>
    </location>
</feature>
<sequence length="686" mass="75701">MAITKGEDVYASLLLNDAYLPGALVLAHSLRDSGTHKKLAILITPENISNEVVEQLQTVYDYVIPVETIQNDRPANLFLMNRPDLHSAFTKINLWKQTQFRKIVYIDADVVAYRAPDELFDLPHAFSAAPDIGWPDLFNTGVMVLSPNMGDYYAMLAMAERGISFDGADQGLLNMHFRNTYNRLSFTYNVTPSAHYQYIPAYKHFQSSINLLHFIGSEKPWVQGRTQTTGSSTYDEMIGRWWAVYDRHYRGNSNKTTDVVQKFVKGEQQQQQQQQQRNVSFQLPSSQSHKTQSHQTQSQNTHSTYTSHGASWDASRHSPPAGSKPEAANFPQTHYTMSSNTQQFVPPARYPSPPKDMWYKVPEAAPTQKPAPIFPWEKQAPEPTRVFPEPPPEQGKLSAASTATPSAVASATASPTLEPKSEAVTPTTPASANPWTSFTTRGNAWDDVPEINRYVDALQKHRRSGSKGSAAATSRPTSPGRAQSRSRKSSRVTDFPTEDDRPSLPVTPAPIQGPRSSRGENERQFPAAAGVPAQSEWNPAVQLEKLAIHQQETLQKLGERPAFGGLAIGTAGKEIPARALPFGSEDARSPTYVTQYPSVLSPKPLRANTTGTNSVRRILTIDEEGGDVPLTTTEKKTPSPLPTQPSVTTAPPSYQGPGVAFEKGEDFPTHETPALPTEEERDVLET</sequence>
<name>GLG_NEUCR</name>